<feature type="chain" id="PRO_0000243976" description="Uncharacterized protein L750">
    <location>
        <begin position="1"/>
        <end position="338"/>
    </location>
</feature>
<organismHost>
    <name type="scientific">Acanthamoeba polyphaga</name>
    <name type="common">Amoeba</name>
    <dbReference type="NCBI Taxonomy" id="5757"/>
</organismHost>
<organism>
    <name type="scientific">Acanthamoeba polyphaga mimivirus</name>
    <name type="common">APMV</name>
    <dbReference type="NCBI Taxonomy" id="212035"/>
    <lineage>
        <taxon>Viruses</taxon>
        <taxon>Varidnaviria</taxon>
        <taxon>Bamfordvirae</taxon>
        <taxon>Nucleocytoviricota</taxon>
        <taxon>Megaviricetes</taxon>
        <taxon>Imitervirales</taxon>
        <taxon>Mimiviridae</taxon>
        <taxon>Megamimivirinae</taxon>
        <taxon>Mimivirus</taxon>
        <taxon>Mimivirus bradfordmassiliense</taxon>
    </lineage>
</organism>
<gene>
    <name type="ordered locus">MIMI_L750</name>
</gene>
<protein>
    <recommendedName>
        <fullName>Uncharacterized protein L750</fullName>
    </recommendedName>
</protein>
<proteinExistence type="predicted"/>
<reference key="1">
    <citation type="journal article" date="2004" name="Science">
        <title>The 1.2-megabase genome sequence of Mimivirus.</title>
        <authorList>
            <person name="Raoult D."/>
            <person name="Audic S."/>
            <person name="Robert C."/>
            <person name="Abergel C."/>
            <person name="Renesto P."/>
            <person name="Ogata H."/>
            <person name="La Scola B."/>
            <person name="Susan M."/>
            <person name="Claverie J.-M."/>
        </authorList>
    </citation>
    <scope>NUCLEOTIDE SEQUENCE [LARGE SCALE GENOMIC DNA]</scope>
    <source>
        <strain>Rowbotham-Bradford</strain>
    </source>
</reference>
<sequence>MELLINNKIKITINLPSKIDWINIPTFLDNYSDDESKITVLKKIVSKNQLTGTIYPTIINVLEMFGSDENKFRVFKIIKNHVLLIADINLLIDLIGLFIDDCFKMKLILEFNHHIYNVKHPFLEFMVKTINSDKNKIHVLSILVPKVLVLDNEDIIRTVHYLSDSFILVDFFKLISPKSKLSFDNVVDIMYTIKSDQQNLKILDVLVSNGFKVCPDQLLEMCRALKSTKSMTKMIGKIPLAKNISDTDKFCEKLAQIIIHPTDYINATDILNINQKISLQYKPHSQGNIIVSGFLTSHVVQKVFCEHEKTTIVYSNSTTMKWTKHSTEYTFINDNDAV</sequence>
<dbReference type="EMBL" id="AY653733">
    <property type="protein sequence ID" value="AAV51010.1"/>
    <property type="molecule type" value="Genomic_DNA"/>
</dbReference>
<dbReference type="KEGG" id="vg:9925407"/>
<dbReference type="Proteomes" id="UP000001134">
    <property type="component" value="Genome"/>
</dbReference>
<accession>Q5UP02</accession>
<name>YL750_MIMIV</name>
<keyword id="KW-1185">Reference proteome</keyword>